<proteinExistence type="inferred from homology"/>
<evidence type="ECO:0000255" key="1">
    <source>
        <dbReference type="HAMAP-Rule" id="MF_01606"/>
    </source>
</evidence>
<gene>
    <name evidence="1" type="primary">ytfE</name>
    <name type="ordered locus">SeAg_B4677</name>
</gene>
<comment type="function">
    <text evidence="1">Di-iron-containing protein involved in the repair of iron-sulfur clusters damaged by oxidative and nitrosative stress conditions.</text>
</comment>
<comment type="subunit">
    <text evidence="1">Homodimer.</text>
</comment>
<comment type="subcellular location">
    <subcellularLocation>
        <location evidence="1">Cytoplasm</location>
    </subcellularLocation>
</comment>
<comment type="similarity">
    <text evidence="1">Belongs to the RIC family. YtfE subfamily.</text>
</comment>
<organism>
    <name type="scientific">Salmonella agona (strain SL483)</name>
    <dbReference type="NCBI Taxonomy" id="454166"/>
    <lineage>
        <taxon>Bacteria</taxon>
        <taxon>Pseudomonadati</taxon>
        <taxon>Pseudomonadota</taxon>
        <taxon>Gammaproteobacteria</taxon>
        <taxon>Enterobacterales</taxon>
        <taxon>Enterobacteriaceae</taxon>
        <taxon>Salmonella</taxon>
    </lineage>
</organism>
<name>YTFE_SALA4</name>
<keyword id="KW-0963">Cytoplasm</keyword>
<keyword id="KW-0408">Iron</keyword>
<keyword id="KW-0479">Metal-binding</keyword>
<keyword id="KW-0346">Stress response</keyword>
<feature type="chain" id="PRO_1000148182" description="Iron-sulfur cluster repair protein YtfE">
    <location>
        <begin position="1"/>
        <end position="220"/>
    </location>
</feature>
<reference key="1">
    <citation type="journal article" date="2011" name="J. Bacteriol.">
        <title>Comparative genomics of 28 Salmonella enterica isolates: evidence for CRISPR-mediated adaptive sublineage evolution.</title>
        <authorList>
            <person name="Fricke W.F."/>
            <person name="Mammel M.K."/>
            <person name="McDermott P.F."/>
            <person name="Tartera C."/>
            <person name="White D.G."/>
            <person name="Leclerc J.E."/>
            <person name="Ravel J."/>
            <person name="Cebula T.A."/>
        </authorList>
    </citation>
    <scope>NUCLEOTIDE SEQUENCE [LARGE SCALE GENOMIC DNA]</scope>
    <source>
        <strain>SL483</strain>
    </source>
</reference>
<protein>
    <recommendedName>
        <fullName evidence="1">Iron-sulfur cluster repair protein YtfE</fullName>
    </recommendedName>
</protein>
<accession>B5F3C5</accession>
<dbReference type="EMBL" id="CP001138">
    <property type="protein sequence ID" value="ACH48919.1"/>
    <property type="molecule type" value="Genomic_DNA"/>
</dbReference>
<dbReference type="RefSeq" id="WP_000331471.1">
    <property type="nucleotide sequence ID" value="NC_011149.1"/>
</dbReference>
<dbReference type="SMR" id="B5F3C5"/>
<dbReference type="KEGG" id="sea:SeAg_B4677"/>
<dbReference type="HOGENOM" id="CLU_076075_2_0_6"/>
<dbReference type="Proteomes" id="UP000008819">
    <property type="component" value="Chromosome"/>
</dbReference>
<dbReference type="GO" id="GO:0005737">
    <property type="term" value="C:cytoplasm"/>
    <property type="evidence" value="ECO:0007669"/>
    <property type="project" value="UniProtKB-SubCell"/>
</dbReference>
<dbReference type="GO" id="GO:0046872">
    <property type="term" value="F:metal ion binding"/>
    <property type="evidence" value="ECO:0007669"/>
    <property type="project" value="UniProtKB-KW"/>
</dbReference>
<dbReference type="GO" id="GO:0030091">
    <property type="term" value="P:protein repair"/>
    <property type="evidence" value="ECO:0007669"/>
    <property type="project" value="UniProtKB-UniRule"/>
</dbReference>
<dbReference type="GO" id="GO:0051409">
    <property type="term" value="P:response to nitrosative stress"/>
    <property type="evidence" value="ECO:0007669"/>
    <property type="project" value="UniProtKB-UniRule"/>
</dbReference>
<dbReference type="GO" id="GO:0006979">
    <property type="term" value="P:response to oxidative stress"/>
    <property type="evidence" value="ECO:0007669"/>
    <property type="project" value="UniProtKB-UniRule"/>
</dbReference>
<dbReference type="FunFam" id="1.20.120.520:FF:000001">
    <property type="entry name" value="Iron-sulfur cluster repair protein YtfE"/>
    <property type="match status" value="1"/>
</dbReference>
<dbReference type="Gene3D" id="1.20.120.520">
    <property type="entry name" value="nmb1532 protein domain like"/>
    <property type="match status" value="1"/>
</dbReference>
<dbReference type="HAMAP" id="MF_01606">
    <property type="entry name" value="RIC_YtfE"/>
    <property type="match status" value="1"/>
</dbReference>
<dbReference type="InterPro" id="IPR023742">
    <property type="entry name" value="FeS-repair_YftE"/>
</dbReference>
<dbReference type="InterPro" id="IPR012312">
    <property type="entry name" value="Hemerythrin-like"/>
</dbReference>
<dbReference type="InterPro" id="IPR019903">
    <property type="entry name" value="RIC_family"/>
</dbReference>
<dbReference type="NCBIfam" id="TIGR03652">
    <property type="entry name" value="FeS_repair_RIC"/>
    <property type="match status" value="1"/>
</dbReference>
<dbReference type="NCBIfam" id="NF008221">
    <property type="entry name" value="PRK10992.1"/>
    <property type="match status" value="1"/>
</dbReference>
<dbReference type="PANTHER" id="PTHR36438">
    <property type="entry name" value="IRON-SULFUR CLUSTER REPAIR PROTEIN YTFE"/>
    <property type="match status" value="1"/>
</dbReference>
<dbReference type="PANTHER" id="PTHR36438:SF1">
    <property type="entry name" value="IRON-SULFUR CLUSTER REPAIR PROTEIN YTFE"/>
    <property type="match status" value="1"/>
</dbReference>
<dbReference type="Pfam" id="PF01814">
    <property type="entry name" value="Hemerythrin"/>
    <property type="match status" value="1"/>
</dbReference>
<dbReference type="Pfam" id="PF04405">
    <property type="entry name" value="ScdA_N"/>
    <property type="match status" value="1"/>
</dbReference>
<sequence length="220" mass="24911">MAYRDQPLGELALSIPRASALFRQYDMDYCCGGKQTLARAAARHDVDIDIIEAQLAQLAEQPIEKDWRAVPLADIIDHIVVRYHDRHREQLPELILQATKVERVHADKPNVPRGLTKYLTALHEELSSHMMKEEQILFPMIKQGMGRQATGPISVMESEHDEAGELVDVIKHVTQNVTPPPEACTTWKAMYNGINEMIDDLMEHISLENNVLFPRALAGE</sequence>